<name>RUTB_ENT38</name>
<evidence type="ECO:0000255" key="1">
    <source>
        <dbReference type="HAMAP-Rule" id="MF_00830"/>
    </source>
</evidence>
<comment type="function">
    <text evidence="1">Hydrolyzes ureidoacrylate to form aminoacrylate and carbamate. The carbamate hydrolyzes spontaneously, thereby releasing one of the nitrogen atoms of the pyrimidine ring as ammonia and one of its carbon atoms as CO2.</text>
</comment>
<comment type="catalytic activity">
    <reaction evidence="1">
        <text>(Z)-3-ureidoacrylate + H2O + H(+) = (Z)-3-aminoacrylate + NH4(+) + CO2</text>
        <dbReference type="Rhea" id="RHEA:42624"/>
        <dbReference type="ChEBI" id="CHEBI:15377"/>
        <dbReference type="ChEBI" id="CHEBI:15378"/>
        <dbReference type="ChEBI" id="CHEBI:16526"/>
        <dbReference type="ChEBI" id="CHEBI:28938"/>
        <dbReference type="ChEBI" id="CHEBI:59891"/>
        <dbReference type="ChEBI" id="CHEBI:59894"/>
        <dbReference type="EC" id="3.5.1.110"/>
    </reaction>
</comment>
<comment type="catalytic activity">
    <reaction evidence="1">
        <text>(Z)-3-ureidoacrylate + H2O = (Z)-3-aminoacrylate + carbamate + H(+)</text>
        <dbReference type="Rhea" id="RHEA:31603"/>
        <dbReference type="ChEBI" id="CHEBI:13941"/>
        <dbReference type="ChEBI" id="CHEBI:15377"/>
        <dbReference type="ChEBI" id="CHEBI:15378"/>
        <dbReference type="ChEBI" id="CHEBI:59891"/>
        <dbReference type="ChEBI" id="CHEBI:59894"/>
    </reaction>
</comment>
<comment type="catalytic activity">
    <reaction evidence="1">
        <text>(Z)-2-methylureidoacrylate + H2O + H(+) = (Z)-2-methylaminoacrylate + NH4(+) + CO2</text>
        <dbReference type="Rhea" id="RHEA:42620"/>
        <dbReference type="ChEBI" id="CHEBI:15377"/>
        <dbReference type="ChEBI" id="CHEBI:15378"/>
        <dbReference type="ChEBI" id="CHEBI:16526"/>
        <dbReference type="ChEBI" id="CHEBI:28938"/>
        <dbReference type="ChEBI" id="CHEBI:143783"/>
        <dbReference type="ChEBI" id="CHEBI:145735"/>
        <dbReference type="EC" id="3.5.1.110"/>
    </reaction>
</comment>
<comment type="similarity">
    <text evidence="1">Belongs to the isochorismatase family. RutB subfamily.</text>
</comment>
<gene>
    <name evidence="1" type="primary">rutB</name>
    <name type="ordered locus">Ent638_1524</name>
</gene>
<dbReference type="EC" id="3.5.1.110" evidence="1"/>
<dbReference type="EMBL" id="CP000653">
    <property type="protein sequence ID" value="ABP60204.1"/>
    <property type="molecule type" value="Genomic_DNA"/>
</dbReference>
<dbReference type="RefSeq" id="WP_012016921.1">
    <property type="nucleotide sequence ID" value="NC_009436.1"/>
</dbReference>
<dbReference type="SMR" id="A4W924"/>
<dbReference type="STRING" id="399742.Ent638_1524"/>
<dbReference type="KEGG" id="ent:Ent638_1524"/>
<dbReference type="eggNOG" id="COG1335">
    <property type="taxonomic scope" value="Bacteria"/>
</dbReference>
<dbReference type="HOGENOM" id="CLU_068979_8_0_6"/>
<dbReference type="OrthoDB" id="9807387at2"/>
<dbReference type="Proteomes" id="UP000000230">
    <property type="component" value="Chromosome"/>
</dbReference>
<dbReference type="GO" id="GO:0016811">
    <property type="term" value="F:hydrolase activity, acting on carbon-nitrogen (but not peptide) bonds, in linear amides"/>
    <property type="evidence" value="ECO:0007669"/>
    <property type="project" value="UniProtKB-UniRule"/>
</dbReference>
<dbReference type="GO" id="GO:0019740">
    <property type="term" value="P:nitrogen utilization"/>
    <property type="evidence" value="ECO:0007669"/>
    <property type="project" value="UniProtKB-UniRule"/>
</dbReference>
<dbReference type="GO" id="GO:0006212">
    <property type="term" value="P:uracil catabolic process"/>
    <property type="evidence" value="ECO:0007669"/>
    <property type="project" value="UniProtKB-UniRule"/>
</dbReference>
<dbReference type="CDD" id="cd00431">
    <property type="entry name" value="cysteine_hydrolases"/>
    <property type="match status" value="1"/>
</dbReference>
<dbReference type="Gene3D" id="3.40.50.850">
    <property type="entry name" value="Isochorismatase-like"/>
    <property type="match status" value="1"/>
</dbReference>
<dbReference type="HAMAP" id="MF_00830">
    <property type="entry name" value="RutB"/>
    <property type="match status" value="1"/>
</dbReference>
<dbReference type="InterPro" id="IPR000868">
    <property type="entry name" value="Isochorismatase-like_dom"/>
</dbReference>
<dbReference type="InterPro" id="IPR050272">
    <property type="entry name" value="Isochorismatase-like_hydrls"/>
</dbReference>
<dbReference type="InterPro" id="IPR036380">
    <property type="entry name" value="Isochorismatase-like_sf"/>
</dbReference>
<dbReference type="InterPro" id="IPR019916">
    <property type="entry name" value="RutB"/>
</dbReference>
<dbReference type="NCBIfam" id="TIGR03614">
    <property type="entry name" value="RutB"/>
    <property type="match status" value="1"/>
</dbReference>
<dbReference type="PANTHER" id="PTHR43540:SF6">
    <property type="entry name" value="ISOCHORISMATASE-LIKE DOMAIN-CONTAINING PROTEIN"/>
    <property type="match status" value="1"/>
</dbReference>
<dbReference type="PANTHER" id="PTHR43540">
    <property type="entry name" value="PEROXYUREIDOACRYLATE/UREIDOACRYLATE AMIDOHYDROLASE-RELATED"/>
    <property type="match status" value="1"/>
</dbReference>
<dbReference type="Pfam" id="PF00857">
    <property type="entry name" value="Isochorismatase"/>
    <property type="match status" value="1"/>
</dbReference>
<dbReference type="SUPFAM" id="SSF52499">
    <property type="entry name" value="Isochorismatase-like hydrolases"/>
    <property type="match status" value="1"/>
</dbReference>
<organism>
    <name type="scientific">Enterobacter sp. (strain 638)</name>
    <dbReference type="NCBI Taxonomy" id="399742"/>
    <lineage>
        <taxon>Bacteria</taxon>
        <taxon>Pseudomonadati</taxon>
        <taxon>Pseudomonadota</taxon>
        <taxon>Gammaproteobacteria</taxon>
        <taxon>Enterobacterales</taxon>
        <taxon>Enterobacteriaceae</taxon>
        <taxon>Enterobacter</taxon>
    </lineage>
</organism>
<sequence>MTTLPARPEAITFAPQHSALIVVDMQNAYASQGGYLDLAGFDVSATQPVIANIKTAVAAARAAGILIIWFQNGWDDQYVEAGGPGSPNFHKSNALKTMRNRPELQGTLLAKGGWDYQLVDELVPEPGDIVLPKPRYSGFFNTPLDSLLRSRGIRHLIFTGIATNVCVESTLRDGFFLEYFGVVLEDATHQAGPEFAQKAALFNIETFFGWVSTVADFCDAVSPPSLARIA</sequence>
<proteinExistence type="inferred from homology"/>
<accession>A4W924</accession>
<feature type="chain" id="PRO_0000402655" description="Ureidoacrylate amidohydrolase RutB">
    <location>
        <begin position="1"/>
        <end position="230"/>
    </location>
</feature>
<feature type="active site" description="Proton acceptor" evidence="1">
    <location>
        <position position="24"/>
    </location>
</feature>
<feature type="active site" evidence="1">
    <location>
        <position position="133"/>
    </location>
</feature>
<feature type="active site" description="Nucleophile" evidence="1">
    <location>
        <position position="166"/>
    </location>
</feature>
<keyword id="KW-0378">Hydrolase</keyword>
<reference key="1">
    <citation type="journal article" date="2010" name="PLoS Genet.">
        <title>Genome sequence of the plant growth promoting endophytic bacterium Enterobacter sp. 638.</title>
        <authorList>
            <person name="Taghavi S."/>
            <person name="van der Lelie D."/>
            <person name="Hoffman A."/>
            <person name="Zhang Y.B."/>
            <person name="Walla M.D."/>
            <person name="Vangronsveld J."/>
            <person name="Newman L."/>
            <person name="Monchy S."/>
        </authorList>
    </citation>
    <scope>NUCLEOTIDE SEQUENCE [LARGE SCALE GENOMIC DNA]</scope>
    <source>
        <strain>638</strain>
    </source>
</reference>
<protein>
    <recommendedName>
        <fullName evidence="1">Ureidoacrylate amidohydrolase RutB</fullName>
        <ecNumber evidence="1">3.5.1.110</ecNumber>
    </recommendedName>
</protein>